<comment type="function">
    <text evidence="1">Component of the acetyl coenzyme A carboxylase (ACC) complex. First, biotin carboxylase catalyzes the carboxylation of biotin on its carrier protein (BCCP) and then the CO(2) group is transferred by the carboxyltransferase to acetyl-CoA to form malonyl-CoA.</text>
</comment>
<comment type="catalytic activity">
    <reaction evidence="1">
        <text>N(6)-carboxybiotinyl-L-lysyl-[protein] + acetyl-CoA = N(6)-biotinyl-L-lysyl-[protein] + malonyl-CoA</text>
        <dbReference type="Rhea" id="RHEA:54728"/>
        <dbReference type="Rhea" id="RHEA-COMP:10505"/>
        <dbReference type="Rhea" id="RHEA-COMP:10506"/>
        <dbReference type="ChEBI" id="CHEBI:57288"/>
        <dbReference type="ChEBI" id="CHEBI:57384"/>
        <dbReference type="ChEBI" id="CHEBI:83144"/>
        <dbReference type="ChEBI" id="CHEBI:83145"/>
        <dbReference type="EC" id="2.1.3.15"/>
    </reaction>
</comment>
<comment type="pathway">
    <text evidence="1">Lipid metabolism; malonyl-CoA biosynthesis; malonyl-CoA from acetyl-CoA: step 1/1.</text>
</comment>
<comment type="subunit">
    <text evidence="1">Acetyl-CoA carboxylase is a heterohexamer composed of biotin carboxyl carrier protein (AccB), biotin carboxylase (AccC) and two subunits each of ACCase subunit alpha (AccA) and ACCase subunit beta (AccD).</text>
</comment>
<comment type="subcellular location">
    <subcellularLocation>
        <location evidence="1">Cytoplasm</location>
    </subcellularLocation>
</comment>
<comment type="similarity">
    <text evidence="1">Belongs to the AccA family.</text>
</comment>
<sequence length="319" mass="35620">MSLNFLDFEKPIVELETKIQALRDVSRHSTSASVDLDKELEQLEKKSLELKKKIFSDLGAWQVAQLARHPQRPYTLDYLKHIFTEFDELAGDRAYADDKAIVGGIARLEGRSVMVIGHQKGRETREKVKRNFGMPKPEGYRKALRLMEMAERFNMPIITFIDTAGAYPGVGAEERGQSEAIAKNLKVMSGLKVPVICNVVGEGGSGGALAIGVGDYVNMLQYSTYSVISPEGCASILWRDSDKAPQAAEAMGLIAPRLKELELIDEIIEEPLGGAHRDHKQTAENVKATLLRQLADLDALDHENLLERRYQRLMNYGYC</sequence>
<reference key="1">
    <citation type="journal article" date="2008" name="PLoS ONE">
        <title>A recalibrated molecular clock and independent origins for the cholera pandemic clones.</title>
        <authorList>
            <person name="Feng L."/>
            <person name="Reeves P.R."/>
            <person name="Lan R."/>
            <person name="Ren Y."/>
            <person name="Gao C."/>
            <person name="Zhou Z."/>
            <person name="Ren Y."/>
            <person name="Cheng J."/>
            <person name="Wang W."/>
            <person name="Wang J."/>
            <person name="Qian W."/>
            <person name="Li D."/>
            <person name="Wang L."/>
        </authorList>
    </citation>
    <scope>NUCLEOTIDE SEQUENCE [LARGE SCALE GENOMIC DNA]</scope>
    <source>
        <strain>M66-2</strain>
    </source>
</reference>
<gene>
    <name evidence="1" type="primary">accA</name>
    <name type="ordered locus">VCM66_2167</name>
</gene>
<accession>C3LPP8</accession>
<protein>
    <recommendedName>
        <fullName evidence="1">Acetyl-coenzyme A carboxylase carboxyl transferase subunit alpha</fullName>
        <shortName evidence="1">ACCase subunit alpha</shortName>
        <shortName evidence="1">Acetyl-CoA carboxylase carboxyltransferase subunit alpha</shortName>
        <ecNumber evidence="1">2.1.3.15</ecNumber>
    </recommendedName>
</protein>
<name>ACCA_VIBCM</name>
<proteinExistence type="inferred from homology"/>
<keyword id="KW-0067">ATP-binding</keyword>
<keyword id="KW-0963">Cytoplasm</keyword>
<keyword id="KW-0275">Fatty acid biosynthesis</keyword>
<keyword id="KW-0276">Fatty acid metabolism</keyword>
<keyword id="KW-0444">Lipid biosynthesis</keyword>
<keyword id="KW-0443">Lipid metabolism</keyword>
<keyword id="KW-0547">Nucleotide-binding</keyword>
<keyword id="KW-0808">Transferase</keyword>
<dbReference type="EC" id="2.1.3.15" evidence="1"/>
<dbReference type="EMBL" id="CP001233">
    <property type="protein sequence ID" value="ACP06468.1"/>
    <property type="molecule type" value="Genomic_DNA"/>
</dbReference>
<dbReference type="RefSeq" id="WP_000055726.1">
    <property type="nucleotide sequence ID" value="NC_012578.1"/>
</dbReference>
<dbReference type="SMR" id="C3LPP8"/>
<dbReference type="GeneID" id="69719131"/>
<dbReference type="KEGG" id="vcm:VCM66_2167"/>
<dbReference type="HOGENOM" id="CLU_015486_0_2_6"/>
<dbReference type="UniPathway" id="UPA00655">
    <property type="reaction ID" value="UER00711"/>
</dbReference>
<dbReference type="Proteomes" id="UP000001217">
    <property type="component" value="Chromosome I"/>
</dbReference>
<dbReference type="GO" id="GO:0009317">
    <property type="term" value="C:acetyl-CoA carboxylase complex"/>
    <property type="evidence" value="ECO:0007669"/>
    <property type="project" value="InterPro"/>
</dbReference>
<dbReference type="GO" id="GO:0003989">
    <property type="term" value="F:acetyl-CoA carboxylase activity"/>
    <property type="evidence" value="ECO:0007669"/>
    <property type="project" value="InterPro"/>
</dbReference>
<dbReference type="GO" id="GO:0005524">
    <property type="term" value="F:ATP binding"/>
    <property type="evidence" value="ECO:0007669"/>
    <property type="project" value="UniProtKB-KW"/>
</dbReference>
<dbReference type="GO" id="GO:0016743">
    <property type="term" value="F:carboxyl- or carbamoyltransferase activity"/>
    <property type="evidence" value="ECO:0007669"/>
    <property type="project" value="UniProtKB-UniRule"/>
</dbReference>
<dbReference type="GO" id="GO:0006633">
    <property type="term" value="P:fatty acid biosynthetic process"/>
    <property type="evidence" value="ECO:0007669"/>
    <property type="project" value="UniProtKB-KW"/>
</dbReference>
<dbReference type="GO" id="GO:2001295">
    <property type="term" value="P:malonyl-CoA biosynthetic process"/>
    <property type="evidence" value="ECO:0007669"/>
    <property type="project" value="UniProtKB-UniRule"/>
</dbReference>
<dbReference type="FunFam" id="3.90.226.10:FF:000008">
    <property type="entry name" value="Acetyl-coenzyme A carboxylase carboxyl transferase subunit alpha"/>
    <property type="match status" value="1"/>
</dbReference>
<dbReference type="Gene3D" id="3.90.226.10">
    <property type="entry name" value="2-enoyl-CoA Hydratase, Chain A, domain 1"/>
    <property type="match status" value="1"/>
</dbReference>
<dbReference type="HAMAP" id="MF_00823">
    <property type="entry name" value="AcetylCoA_CT_alpha"/>
    <property type="match status" value="1"/>
</dbReference>
<dbReference type="InterPro" id="IPR001095">
    <property type="entry name" value="Acetyl_CoA_COase_a_su"/>
</dbReference>
<dbReference type="InterPro" id="IPR029045">
    <property type="entry name" value="ClpP/crotonase-like_dom_sf"/>
</dbReference>
<dbReference type="InterPro" id="IPR011763">
    <property type="entry name" value="COA_CT_C"/>
</dbReference>
<dbReference type="NCBIfam" id="TIGR00513">
    <property type="entry name" value="accA"/>
    <property type="match status" value="1"/>
</dbReference>
<dbReference type="NCBIfam" id="NF041504">
    <property type="entry name" value="AccA_sub"/>
    <property type="match status" value="1"/>
</dbReference>
<dbReference type="NCBIfam" id="NF004344">
    <property type="entry name" value="PRK05724.1"/>
    <property type="match status" value="1"/>
</dbReference>
<dbReference type="PANTHER" id="PTHR42853">
    <property type="entry name" value="ACETYL-COENZYME A CARBOXYLASE CARBOXYL TRANSFERASE SUBUNIT ALPHA"/>
    <property type="match status" value="1"/>
</dbReference>
<dbReference type="PANTHER" id="PTHR42853:SF3">
    <property type="entry name" value="ACETYL-COENZYME A CARBOXYLASE CARBOXYL TRANSFERASE SUBUNIT ALPHA, CHLOROPLASTIC"/>
    <property type="match status" value="1"/>
</dbReference>
<dbReference type="Pfam" id="PF03255">
    <property type="entry name" value="ACCA"/>
    <property type="match status" value="1"/>
</dbReference>
<dbReference type="PRINTS" id="PR01069">
    <property type="entry name" value="ACCCTRFRASEA"/>
</dbReference>
<dbReference type="SUPFAM" id="SSF52096">
    <property type="entry name" value="ClpP/crotonase"/>
    <property type="match status" value="1"/>
</dbReference>
<dbReference type="PROSITE" id="PS50989">
    <property type="entry name" value="COA_CT_CTER"/>
    <property type="match status" value="1"/>
</dbReference>
<feature type="chain" id="PRO_1000148759" description="Acetyl-coenzyme A carboxylase carboxyl transferase subunit alpha">
    <location>
        <begin position="1"/>
        <end position="319"/>
    </location>
</feature>
<feature type="domain" description="CoA carboxyltransferase C-terminal" evidence="2">
    <location>
        <begin position="35"/>
        <end position="296"/>
    </location>
</feature>
<organism>
    <name type="scientific">Vibrio cholerae serotype O1 (strain M66-2)</name>
    <dbReference type="NCBI Taxonomy" id="579112"/>
    <lineage>
        <taxon>Bacteria</taxon>
        <taxon>Pseudomonadati</taxon>
        <taxon>Pseudomonadota</taxon>
        <taxon>Gammaproteobacteria</taxon>
        <taxon>Vibrionales</taxon>
        <taxon>Vibrionaceae</taxon>
        <taxon>Vibrio</taxon>
    </lineage>
</organism>
<evidence type="ECO:0000255" key="1">
    <source>
        <dbReference type="HAMAP-Rule" id="MF_00823"/>
    </source>
</evidence>
<evidence type="ECO:0000255" key="2">
    <source>
        <dbReference type="PROSITE-ProRule" id="PRU01137"/>
    </source>
</evidence>